<organism>
    <name type="scientific">Rickettsia peacockii (strain Rustic)</name>
    <dbReference type="NCBI Taxonomy" id="562019"/>
    <lineage>
        <taxon>Bacteria</taxon>
        <taxon>Pseudomonadati</taxon>
        <taxon>Pseudomonadota</taxon>
        <taxon>Alphaproteobacteria</taxon>
        <taxon>Rickettsiales</taxon>
        <taxon>Rickettsiaceae</taxon>
        <taxon>Rickettsieae</taxon>
        <taxon>Rickettsia</taxon>
        <taxon>spotted fever group</taxon>
    </lineage>
</organism>
<comment type="function">
    <text evidence="1">Acts as a chaperone.</text>
</comment>
<comment type="induction">
    <text evidence="1">By stress conditions e.g. heat shock.</text>
</comment>
<comment type="similarity">
    <text evidence="1">Belongs to the heat shock protein 70 family.</text>
</comment>
<accession>C4K110</accession>
<name>DNAK_RICPU</name>
<proteinExistence type="inferred from homology"/>
<gene>
    <name evidence="1" type="primary">dnaK</name>
    <name type="ordered locus">RPR_02055</name>
</gene>
<protein>
    <recommendedName>
        <fullName evidence="1">Chaperone protein DnaK</fullName>
    </recommendedName>
    <alternativeName>
        <fullName evidence="1">HSP70</fullName>
    </alternativeName>
    <alternativeName>
        <fullName evidence="1">Heat shock 70 kDa protein</fullName>
    </alternativeName>
    <alternativeName>
        <fullName evidence="1">Heat shock protein 70</fullName>
    </alternativeName>
</protein>
<sequence>MGKVIGIDLGTTNSCVAVMEGKEPKVIENAEGERTTPSIIAFANGEKLVGQSAKRQAVTNHRNTIYAVKRLIGRNFIDPMVKKDQGIVPYNIVKADNGDAWVEADNNKYSPSQISAFILQKMKETAENYLGDKVTQAVITVPAYFNDAQRQATKDAGKIAGLEVLRIINEPTAAALAYGFEKSASKTIAVYDLGGGTFDVSILEIADGVFEVKSTNGDTFLGGEDFDTRILNHLIDVFKKENGIDLSNDPLALQRLKEAAEKAKKELSSAVTTNINLPYITADSSGPKHLNIKFTRAELEKLVDDLIEKTIEPCRKALQDAGFKASDIQEVVLVGGMTRMPKVQEAVKKFFGREPHKGVNPDEVVALGAAIQGGVLNKEVTDILLLDVTPLSLGIETLGGVFTRLIDRNTTIPTKKSQVFSTADDNQHAVTIRVFQGEREMAKDNKLLGQFNLEGIPLAPRGLPQIEVTFDIDANGIVHVSAKDKASGKEQKVTIQASGGLSDAEIEQMVKDAEQNADEDKKRKELIEAKNAADSLVYSTEKTLTEYGDKLSSDDKGAVEEALAALKAVLESEDTALIKEKTESLTAASMKIGEAMYKAQSESQPAAESAANDEKIVDADFQDVEKK</sequence>
<evidence type="ECO:0000255" key="1">
    <source>
        <dbReference type="HAMAP-Rule" id="MF_00332"/>
    </source>
</evidence>
<evidence type="ECO:0000256" key="2">
    <source>
        <dbReference type="SAM" id="MobiDB-lite"/>
    </source>
</evidence>
<reference key="1">
    <citation type="journal article" date="2009" name="PLoS ONE">
        <title>Genome sequence of the endosymbiont Rickettsia peacockii and comparison with virulent Rickettsia rickettsii: identification of virulence factors.</title>
        <authorList>
            <person name="Felsheim R.F."/>
            <person name="Kurtti T.J."/>
            <person name="Munderloh U.G."/>
        </authorList>
    </citation>
    <scope>NUCLEOTIDE SEQUENCE [LARGE SCALE GENOMIC DNA]</scope>
    <source>
        <strain>Rustic</strain>
    </source>
</reference>
<keyword id="KW-0067">ATP-binding</keyword>
<keyword id="KW-0143">Chaperone</keyword>
<keyword id="KW-0547">Nucleotide-binding</keyword>
<keyword id="KW-0597">Phosphoprotein</keyword>
<keyword id="KW-0346">Stress response</keyword>
<feature type="chain" id="PRO_1000205197" description="Chaperone protein DnaK">
    <location>
        <begin position="1"/>
        <end position="627"/>
    </location>
</feature>
<feature type="region of interest" description="Disordered" evidence="2">
    <location>
        <begin position="598"/>
        <end position="627"/>
    </location>
</feature>
<feature type="compositionally biased region" description="Low complexity" evidence="2">
    <location>
        <begin position="599"/>
        <end position="610"/>
    </location>
</feature>
<feature type="compositionally biased region" description="Basic and acidic residues" evidence="2">
    <location>
        <begin position="612"/>
        <end position="627"/>
    </location>
</feature>
<feature type="modified residue" description="Phosphothreonine; by autocatalysis" evidence="1">
    <location>
        <position position="197"/>
    </location>
</feature>
<dbReference type="EMBL" id="CP001227">
    <property type="protein sequence ID" value="ACR47261.1"/>
    <property type="molecule type" value="Genomic_DNA"/>
</dbReference>
<dbReference type="RefSeq" id="WP_012736535.1">
    <property type="nucleotide sequence ID" value="NC_012730.1"/>
</dbReference>
<dbReference type="SMR" id="C4K110"/>
<dbReference type="KEGG" id="rpk:RPR_02055"/>
<dbReference type="HOGENOM" id="CLU_005965_2_4_5"/>
<dbReference type="Proteomes" id="UP000005015">
    <property type="component" value="Chromosome"/>
</dbReference>
<dbReference type="GO" id="GO:0005524">
    <property type="term" value="F:ATP binding"/>
    <property type="evidence" value="ECO:0007669"/>
    <property type="project" value="UniProtKB-UniRule"/>
</dbReference>
<dbReference type="GO" id="GO:0140662">
    <property type="term" value="F:ATP-dependent protein folding chaperone"/>
    <property type="evidence" value="ECO:0007669"/>
    <property type="project" value="InterPro"/>
</dbReference>
<dbReference type="GO" id="GO:0051082">
    <property type="term" value="F:unfolded protein binding"/>
    <property type="evidence" value="ECO:0007669"/>
    <property type="project" value="InterPro"/>
</dbReference>
<dbReference type="FunFam" id="2.60.34.10:FF:000014">
    <property type="entry name" value="Chaperone protein DnaK HSP70"/>
    <property type="match status" value="1"/>
</dbReference>
<dbReference type="FunFam" id="3.30.420.40:FF:000020">
    <property type="entry name" value="Chaperone protein HscA homolog"/>
    <property type="match status" value="1"/>
</dbReference>
<dbReference type="FunFam" id="3.30.30.30:FF:000003">
    <property type="entry name" value="Heat shock protein 9"/>
    <property type="match status" value="1"/>
</dbReference>
<dbReference type="FunFam" id="1.20.1270.10:FF:000001">
    <property type="entry name" value="Molecular chaperone DnaK"/>
    <property type="match status" value="1"/>
</dbReference>
<dbReference type="FunFam" id="3.30.420.40:FF:000004">
    <property type="entry name" value="Molecular chaperone DnaK"/>
    <property type="match status" value="1"/>
</dbReference>
<dbReference type="FunFam" id="3.90.640.10:FF:000003">
    <property type="entry name" value="Molecular chaperone DnaK"/>
    <property type="match status" value="1"/>
</dbReference>
<dbReference type="Gene3D" id="1.20.1270.10">
    <property type="match status" value="1"/>
</dbReference>
<dbReference type="Gene3D" id="3.30.420.40">
    <property type="match status" value="2"/>
</dbReference>
<dbReference type="Gene3D" id="3.90.640.10">
    <property type="entry name" value="Actin, Chain A, domain 4"/>
    <property type="match status" value="1"/>
</dbReference>
<dbReference type="Gene3D" id="2.60.34.10">
    <property type="entry name" value="Substrate Binding Domain Of DNAk, Chain A, domain 1"/>
    <property type="match status" value="1"/>
</dbReference>
<dbReference type="HAMAP" id="MF_00332">
    <property type="entry name" value="DnaK"/>
    <property type="match status" value="1"/>
</dbReference>
<dbReference type="InterPro" id="IPR043129">
    <property type="entry name" value="ATPase_NBD"/>
</dbReference>
<dbReference type="InterPro" id="IPR012725">
    <property type="entry name" value="Chaperone_DnaK"/>
</dbReference>
<dbReference type="InterPro" id="IPR018181">
    <property type="entry name" value="Heat_shock_70_CS"/>
</dbReference>
<dbReference type="InterPro" id="IPR029048">
    <property type="entry name" value="HSP70_C_sf"/>
</dbReference>
<dbReference type="InterPro" id="IPR029047">
    <property type="entry name" value="HSP70_peptide-bd_sf"/>
</dbReference>
<dbReference type="InterPro" id="IPR013126">
    <property type="entry name" value="Hsp_70_fam"/>
</dbReference>
<dbReference type="NCBIfam" id="NF001413">
    <property type="entry name" value="PRK00290.1"/>
    <property type="match status" value="1"/>
</dbReference>
<dbReference type="NCBIfam" id="NF003520">
    <property type="entry name" value="PRK05183.1"/>
    <property type="match status" value="1"/>
</dbReference>
<dbReference type="NCBIfam" id="TIGR02350">
    <property type="entry name" value="prok_dnaK"/>
    <property type="match status" value="1"/>
</dbReference>
<dbReference type="PANTHER" id="PTHR19375">
    <property type="entry name" value="HEAT SHOCK PROTEIN 70KDA"/>
    <property type="match status" value="1"/>
</dbReference>
<dbReference type="Pfam" id="PF00012">
    <property type="entry name" value="HSP70"/>
    <property type="match status" value="1"/>
</dbReference>
<dbReference type="PRINTS" id="PR00301">
    <property type="entry name" value="HEATSHOCK70"/>
</dbReference>
<dbReference type="SUPFAM" id="SSF53067">
    <property type="entry name" value="Actin-like ATPase domain"/>
    <property type="match status" value="2"/>
</dbReference>
<dbReference type="SUPFAM" id="SSF100934">
    <property type="entry name" value="Heat shock protein 70kD (HSP70), C-terminal subdomain"/>
    <property type="match status" value="1"/>
</dbReference>
<dbReference type="SUPFAM" id="SSF100920">
    <property type="entry name" value="Heat shock protein 70kD (HSP70), peptide-binding domain"/>
    <property type="match status" value="1"/>
</dbReference>
<dbReference type="PROSITE" id="PS00297">
    <property type="entry name" value="HSP70_1"/>
    <property type="match status" value="1"/>
</dbReference>
<dbReference type="PROSITE" id="PS00329">
    <property type="entry name" value="HSP70_2"/>
    <property type="match status" value="1"/>
</dbReference>
<dbReference type="PROSITE" id="PS01036">
    <property type="entry name" value="HSP70_3"/>
    <property type="match status" value="1"/>
</dbReference>